<feature type="chain" id="PRO_1000166767" description="Small ribosomal subunit protein uS14">
    <location>
        <begin position="1"/>
        <end position="61"/>
    </location>
</feature>
<feature type="binding site" evidence="1">
    <location>
        <position position="24"/>
    </location>
    <ligand>
        <name>Zn(2+)</name>
        <dbReference type="ChEBI" id="CHEBI:29105"/>
    </ligand>
</feature>
<feature type="binding site" evidence="1">
    <location>
        <position position="27"/>
    </location>
    <ligand>
        <name>Zn(2+)</name>
        <dbReference type="ChEBI" id="CHEBI:29105"/>
    </ligand>
</feature>
<feature type="binding site" evidence="1">
    <location>
        <position position="40"/>
    </location>
    <ligand>
        <name>Zn(2+)</name>
        <dbReference type="ChEBI" id="CHEBI:29105"/>
    </ligand>
</feature>
<feature type="binding site" evidence="1">
    <location>
        <position position="43"/>
    </location>
    <ligand>
        <name>Zn(2+)</name>
        <dbReference type="ChEBI" id="CHEBI:29105"/>
    </ligand>
</feature>
<dbReference type="EMBL" id="CP001358">
    <property type="protein sequence ID" value="ACL48581.1"/>
    <property type="molecule type" value="Genomic_DNA"/>
</dbReference>
<dbReference type="SMR" id="B8IYK4"/>
<dbReference type="STRING" id="525146.Ddes_0673"/>
<dbReference type="KEGG" id="dds:Ddes_0673"/>
<dbReference type="eggNOG" id="COG0199">
    <property type="taxonomic scope" value="Bacteria"/>
</dbReference>
<dbReference type="HOGENOM" id="CLU_139869_3_0_7"/>
<dbReference type="GO" id="GO:0005737">
    <property type="term" value="C:cytoplasm"/>
    <property type="evidence" value="ECO:0007669"/>
    <property type="project" value="UniProtKB-ARBA"/>
</dbReference>
<dbReference type="GO" id="GO:0015935">
    <property type="term" value="C:small ribosomal subunit"/>
    <property type="evidence" value="ECO:0007669"/>
    <property type="project" value="TreeGrafter"/>
</dbReference>
<dbReference type="GO" id="GO:0019843">
    <property type="term" value="F:rRNA binding"/>
    <property type="evidence" value="ECO:0007669"/>
    <property type="project" value="UniProtKB-UniRule"/>
</dbReference>
<dbReference type="GO" id="GO:0003735">
    <property type="term" value="F:structural constituent of ribosome"/>
    <property type="evidence" value="ECO:0007669"/>
    <property type="project" value="InterPro"/>
</dbReference>
<dbReference type="GO" id="GO:0008270">
    <property type="term" value="F:zinc ion binding"/>
    <property type="evidence" value="ECO:0007669"/>
    <property type="project" value="UniProtKB-UniRule"/>
</dbReference>
<dbReference type="GO" id="GO:0006412">
    <property type="term" value="P:translation"/>
    <property type="evidence" value="ECO:0007669"/>
    <property type="project" value="UniProtKB-UniRule"/>
</dbReference>
<dbReference type="FunFam" id="4.10.830.10:FF:000001">
    <property type="entry name" value="30S ribosomal protein S14 type Z"/>
    <property type="match status" value="1"/>
</dbReference>
<dbReference type="Gene3D" id="4.10.830.10">
    <property type="entry name" value="30s Ribosomal Protein S14, Chain N"/>
    <property type="match status" value="1"/>
</dbReference>
<dbReference type="HAMAP" id="MF_01364_B">
    <property type="entry name" value="Ribosomal_uS14_2_B"/>
    <property type="match status" value="1"/>
</dbReference>
<dbReference type="InterPro" id="IPR001209">
    <property type="entry name" value="Ribosomal_uS14"/>
</dbReference>
<dbReference type="InterPro" id="IPR023053">
    <property type="entry name" value="Ribosomal_uS14_bact"/>
</dbReference>
<dbReference type="InterPro" id="IPR018271">
    <property type="entry name" value="Ribosomal_uS14_CS"/>
</dbReference>
<dbReference type="InterPro" id="IPR043140">
    <property type="entry name" value="Ribosomal_uS14_sf"/>
</dbReference>
<dbReference type="NCBIfam" id="NF005974">
    <property type="entry name" value="PRK08061.1"/>
    <property type="match status" value="1"/>
</dbReference>
<dbReference type="PANTHER" id="PTHR19836">
    <property type="entry name" value="30S RIBOSOMAL PROTEIN S14"/>
    <property type="match status" value="1"/>
</dbReference>
<dbReference type="PANTHER" id="PTHR19836:SF19">
    <property type="entry name" value="SMALL RIBOSOMAL SUBUNIT PROTEIN US14M"/>
    <property type="match status" value="1"/>
</dbReference>
<dbReference type="Pfam" id="PF00253">
    <property type="entry name" value="Ribosomal_S14"/>
    <property type="match status" value="1"/>
</dbReference>
<dbReference type="SUPFAM" id="SSF57716">
    <property type="entry name" value="Glucocorticoid receptor-like (DNA-binding domain)"/>
    <property type="match status" value="1"/>
</dbReference>
<dbReference type="PROSITE" id="PS00527">
    <property type="entry name" value="RIBOSOMAL_S14"/>
    <property type="match status" value="1"/>
</dbReference>
<name>RS14Z_DESDA</name>
<keyword id="KW-0479">Metal-binding</keyword>
<keyword id="KW-0687">Ribonucleoprotein</keyword>
<keyword id="KW-0689">Ribosomal protein</keyword>
<keyword id="KW-0694">RNA-binding</keyword>
<keyword id="KW-0699">rRNA-binding</keyword>
<keyword id="KW-0862">Zinc</keyword>
<protein>
    <recommendedName>
        <fullName evidence="1">Small ribosomal subunit protein uS14</fullName>
    </recommendedName>
    <alternativeName>
        <fullName evidence="2">30S ribosomal protein S14 type Z</fullName>
    </alternativeName>
</protein>
<comment type="function">
    <text evidence="1">Binds 16S rRNA, required for the assembly of 30S particles and may also be responsible for determining the conformation of the 16S rRNA at the A site.</text>
</comment>
<comment type="cofactor">
    <cofactor evidence="1">
        <name>Zn(2+)</name>
        <dbReference type="ChEBI" id="CHEBI:29105"/>
    </cofactor>
    <text evidence="1">Binds 1 zinc ion per subunit.</text>
</comment>
<comment type="subunit">
    <text evidence="1">Part of the 30S ribosomal subunit. Contacts proteins S3 and S10.</text>
</comment>
<comment type="similarity">
    <text evidence="1">Belongs to the universal ribosomal protein uS14 family. Zinc-binding uS14 subfamily.</text>
</comment>
<proteinExistence type="inferred from homology"/>
<gene>
    <name evidence="1" type="primary">rpsZ</name>
    <name evidence="1" type="synonym">rpsN</name>
    <name type="ordered locus">Ddes_0673</name>
</gene>
<accession>B8IYK4</accession>
<organism>
    <name type="scientific">Desulfovibrio desulfuricans (strain ATCC 27774 / DSM 6949 / MB)</name>
    <dbReference type="NCBI Taxonomy" id="525146"/>
    <lineage>
        <taxon>Bacteria</taxon>
        <taxon>Pseudomonadati</taxon>
        <taxon>Thermodesulfobacteriota</taxon>
        <taxon>Desulfovibrionia</taxon>
        <taxon>Desulfovibrionales</taxon>
        <taxon>Desulfovibrionaceae</taxon>
        <taxon>Desulfovibrio</taxon>
    </lineage>
</organism>
<sequence length="61" mass="7103">MSRTSLEVKAKRKPKFSARAYNRCPLCGRPRAFLRQFGICRICFRNMALRGELPGVRKSSW</sequence>
<evidence type="ECO:0000255" key="1">
    <source>
        <dbReference type="HAMAP-Rule" id="MF_01364"/>
    </source>
</evidence>
<evidence type="ECO:0000305" key="2"/>
<reference key="1">
    <citation type="submission" date="2009-01" db="EMBL/GenBank/DDBJ databases">
        <title>Complete sequence of Desulfovibrio desulfuricans subsp. desulfuricans str. ATCC 27774.</title>
        <authorList>
            <consortium name="US DOE Joint Genome Institute"/>
            <person name="Lucas S."/>
            <person name="Copeland A."/>
            <person name="Lapidus A."/>
            <person name="Glavina del Rio T."/>
            <person name="Tice H."/>
            <person name="Bruce D."/>
            <person name="Goodwin L."/>
            <person name="Pitluck S."/>
            <person name="Sims D."/>
            <person name="Lu M."/>
            <person name="Kiss H."/>
            <person name="Meineke L."/>
            <person name="Brettin T."/>
            <person name="Detter J.C."/>
            <person name="Han C."/>
            <person name="Larimer F."/>
            <person name="Land M."/>
            <person name="Hauser L."/>
            <person name="Kyrpides N."/>
            <person name="Ovchinnikova G."/>
            <person name="Hazen T.C."/>
        </authorList>
    </citation>
    <scope>NUCLEOTIDE SEQUENCE [LARGE SCALE GENOMIC DNA]</scope>
    <source>
        <strain>ATCC 27774 / DSM 6949 / MB</strain>
    </source>
</reference>